<gene>
    <name evidence="1" type="primary">eif2g</name>
    <name type="ordered locus">AF_0592</name>
</gene>
<proteinExistence type="inferred from homology"/>
<protein>
    <recommendedName>
        <fullName evidence="1">Translation initiation factor 2 subunit gamma</fullName>
        <ecNumber evidence="1">3.6.5.3</ecNumber>
    </recommendedName>
    <alternativeName>
        <fullName evidence="1">aIF2-gamma</fullName>
    </alternativeName>
    <alternativeName>
        <fullName evidence="1">eIF-2-gamma</fullName>
    </alternativeName>
</protein>
<reference key="1">
    <citation type="journal article" date="1997" name="Nature">
        <title>The complete genome sequence of the hyperthermophilic, sulphate-reducing archaeon Archaeoglobus fulgidus.</title>
        <authorList>
            <person name="Klenk H.-P."/>
            <person name="Clayton R.A."/>
            <person name="Tomb J.-F."/>
            <person name="White O."/>
            <person name="Nelson K.E."/>
            <person name="Ketchum K.A."/>
            <person name="Dodson R.J."/>
            <person name="Gwinn M.L."/>
            <person name="Hickey E.K."/>
            <person name="Peterson J.D."/>
            <person name="Richardson D.L."/>
            <person name="Kerlavage A.R."/>
            <person name="Graham D.E."/>
            <person name="Kyrpides N.C."/>
            <person name="Fleischmann R.D."/>
            <person name="Quackenbush J."/>
            <person name="Lee N.H."/>
            <person name="Sutton G.G."/>
            <person name="Gill S.R."/>
            <person name="Kirkness E.F."/>
            <person name="Dougherty B.A."/>
            <person name="McKenney K."/>
            <person name="Adams M.D."/>
            <person name="Loftus B.J."/>
            <person name="Peterson S.N."/>
            <person name="Reich C.I."/>
            <person name="McNeil L.K."/>
            <person name="Badger J.H."/>
            <person name="Glodek A."/>
            <person name="Zhou L."/>
            <person name="Overbeek R."/>
            <person name="Gocayne J.D."/>
            <person name="Weidman J.F."/>
            <person name="McDonald L.A."/>
            <person name="Utterback T.R."/>
            <person name="Cotton M.D."/>
            <person name="Spriggs T."/>
            <person name="Artiach P."/>
            <person name="Kaine B.P."/>
            <person name="Sykes S.M."/>
            <person name="Sadow P.W."/>
            <person name="D'Andrea K.P."/>
            <person name="Bowman C."/>
            <person name="Fujii C."/>
            <person name="Garland S.A."/>
            <person name="Mason T.M."/>
            <person name="Olsen G.J."/>
            <person name="Fraser C.M."/>
            <person name="Smith H.O."/>
            <person name="Woese C.R."/>
            <person name="Venter J.C."/>
        </authorList>
    </citation>
    <scope>NUCLEOTIDE SEQUENCE [LARGE SCALE GENOMIC DNA]</scope>
    <source>
        <strain>ATCC 49558 / DSM 4304 / JCM 9628 / NBRC 100126 / VC-16</strain>
    </source>
</reference>
<accession>O29663</accession>
<name>IF2G_ARCFU</name>
<dbReference type="EC" id="3.6.5.3" evidence="1"/>
<dbReference type="EMBL" id="AE000782">
    <property type="protein sequence ID" value="AAB90649.1"/>
    <property type="molecule type" value="Genomic_DNA"/>
</dbReference>
<dbReference type="PIR" id="H69323">
    <property type="entry name" value="H69323"/>
</dbReference>
<dbReference type="SMR" id="O29663"/>
<dbReference type="STRING" id="224325.AF_0592"/>
<dbReference type="PaxDb" id="224325-AF_0592"/>
<dbReference type="EnsemblBacteria" id="AAB90649">
    <property type="protein sequence ID" value="AAB90649"/>
    <property type="gene ID" value="AF_0592"/>
</dbReference>
<dbReference type="KEGG" id="afu:AF_0592"/>
<dbReference type="eggNOG" id="arCOG01563">
    <property type="taxonomic scope" value="Archaea"/>
</dbReference>
<dbReference type="HOGENOM" id="CLU_027154_0_1_2"/>
<dbReference type="OrthoDB" id="7798at2157"/>
<dbReference type="PhylomeDB" id="O29663"/>
<dbReference type="Proteomes" id="UP000002199">
    <property type="component" value="Chromosome"/>
</dbReference>
<dbReference type="GO" id="GO:0005829">
    <property type="term" value="C:cytosol"/>
    <property type="evidence" value="ECO:0007669"/>
    <property type="project" value="TreeGrafter"/>
</dbReference>
<dbReference type="GO" id="GO:0005525">
    <property type="term" value="F:GTP binding"/>
    <property type="evidence" value="ECO:0007669"/>
    <property type="project" value="UniProtKB-UniRule"/>
</dbReference>
<dbReference type="GO" id="GO:0003924">
    <property type="term" value="F:GTPase activity"/>
    <property type="evidence" value="ECO:0007669"/>
    <property type="project" value="InterPro"/>
</dbReference>
<dbReference type="GO" id="GO:0046872">
    <property type="term" value="F:metal ion binding"/>
    <property type="evidence" value="ECO:0007669"/>
    <property type="project" value="UniProtKB-KW"/>
</dbReference>
<dbReference type="GO" id="GO:0003746">
    <property type="term" value="F:translation elongation factor activity"/>
    <property type="evidence" value="ECO:0007669"/>
    <property type="project" value="UniProtKB-UniRule"/>
</dbReference>
<dbReference type="GO" id="GO:0003743">
    <property type="term" value="F:translation initiation factor activity"/>
    <property type="evidence" value="ECO:0007669"/>
    <property type="project" value="UniProtKB-KW"/>
</dbReference>
<dbReference type="GO" id="GO:0000049">
    <property type="term" value="F:tRNA binding"/>
    <property type="evidence" value="ECO:0007669"/>
    <property type="project" value="InterPro"/>
</dbReference>
<dbReference type="GO" id="GO:0001731">
    <property type="term" value="P:formation of translation preinitiation complex"/>
    <property type="evidence" value="ECO:0007669"/>
    <property type="project" value="TreeGrafter"/>
</dbReference>
<dbReference type="CDD" id="cd01888">
    <property type="entry name" value="eIF2_gamma"/>
    <property type="match status" value="1"/>
</dbReference>
<dbReference type="CDD" id="cd03688">
    <property type="entry name" value="eIF2_gamma_II"/>
    <property type="match status" value="1"/>
</dbReference>
<dbReference type="CDD" id="cd15490">
    <property type="entry name" value="eIF2_gamma_III"/>
    <property type="match status" value="1"/>
</dbReference>
<dbReference type="FunFam" id="2.40.30.10:FF:000009">
    <property type="entry name" value="Eukaryotic translation initiation factor 2 subunit gamma"/>
    <property type="match status" value="1"/>
</dbReference>
<dbReference type="FunFam" id="3.40.50.300:FF:000065">
    <property type="entry name" value="Eukaryotic translation initiation factor 2 subunit gamma"/>
    <property type="match status" value="1"/>
</dbReference>
<dbReference type="FunFam" id="2.40.30.10:FF:000075">
    <property type="entry name" value="Translation initiation factor 2 subunit gamma"/>
    <property type="match status" value="1"/>
</dbReference>
<dbReference type="Gene3D" id="3.40.50.300">
    <property type="entry name" value="P-loop containing nucleotide triphosphate hydrolases"/>
    <property type="match status" value="1"/>
</dbReference>
<dbReference type="Gene3D" id="2.40.30.10">
    <property type="entry name" value="Translation factors"/>
    <property type="match status" value="2"/>
</dbReference>
<dbReference type="HAMAP" id="MF_00119">
    <property type="entry name" value="eIF_2_gamma"/>
    <property type="match status" value="1"/>
</dbReference>
<dbReference type="InterPro" id="IPR004161">
    <property type="entry name" value="EFTu-like_2"/>
</dbReference>
<dbReference type="InterPro" id="IPR050543">
    <property type="entry name" value="eIF2G"/>
</dbReference>
<dbReference type="InterPro" id="IPR015256">
    <property type="entry name" value="eIF2g_C"/>
</dbReference>
<dbReference type="InterPro" id="IPR044127">
    <property type="entry name" value="eIF2g_dom_2"/>
</dbReference>
<dbReference type="InterPro" id="IPR044128">
    <property type="entry name" value="eIF2g_GTP-bd"/>
</dbReference>
<dbReference type="InterPro" id="IPR027417">
    <property type="entry name" value="P-loop_NTPase"/>
</dbReference>
<dbReference type="InterPro" id="IPR005225">
    <property type="entry name" value="Small_GTP-bd"/>
</dbReference>
<dbReference type="InterPro" id="IPR000795">
    <property type="entry name" value="T_Tr_GTP-bd_dom"/>
</dbReference>
<dbReference type="InterPro" id="IPR022424">
    <property type="entry name" value="TIF2_gsu"/>
</dbReference>
<dbReference type="InterPro" id="IPR009000">
    <property type="entry name" value="Transl_B-barrel_sf"/>
</dbReference>
<dbReference type="InterPro" id="IPR009001">
    <property type="entry name" value="Transl_elong_EF1A/Init_IF2_C"/>
</dbReference>
<dbReference type="NCBIfam" id="TIGR03680">
    <property type="entry name" value="eif2g_arch"/>
    <property type="match status" value="1"/>
</dbReference>
<dbReference type="NCBIfam" id="NF003077">
    <property type="entry name" value="PRK04000.1"/>
    <property type="match status" value="1"/>
</dbReference>
<dbReference type="NCBIfam" id="TIGR00231">
    <property type="entry name" value="small_GTP"/>
    <property type="match status" value="1"/>
</dbReference>
<dbReference type="PANTHER" id="PTHR42854">
    <property type="entry name" value="EUKARYOTIC TRANSLATION INITIATION FACTOR 2 SUBUNIT 3 FAMILY MEMBER"/>
    <property type="match status" value="1"/>
</dbReference>
<dbReference type="PANTHER" id="PTHR42854:SF3">
    <property type="entry name" value="EUKARYOTIC TRANSLATION INITIATION FACTOR 2 SUBUNIT 3-RELATED"/>
    <property type="match status" value="1"/>
</dbReference>
<dbReference type="Pfam" id="PF09173">
    <property type="entry name" value="eIF2_C"/>
    <property type="match status" value="1"/>
</dbReference>
<dbReference type="Pfam" id="PF00009">
    <property type="entry name" value="GTP_EFTU"/>
    <property type="match status" value="1"/>
</dbReference>
<dbReference type="Pfam" id="PF03144">
    <property type="entry name" value="GTP_EFTU_D2"/>
    <property type="match status" value="1"/>
</dbReference>
<dbReference type="PRINTS" id="PR00315">
    <property type="entry name" value="ELONGATNFCT"/>
</dbReference>
<dbReference type="SUPFAM" id="SSF50465">
    <property type="entry name" value="EF-Tu/eEF-1alpha/eIF2-gamma C-terminal domain"/>
    <property type="match status" value="1"/>
</dbReference>
<dbReference type="SUPFAM" id="SSF52540">
    <property type="entry name" value="P-loop containing nucleoside triphosphate hydrolases"/>
    <property type="match status" value="1"/>
</dbReference>
<dbReference type="SUPFAM" id="SSF50447">
    <property type="entry name" value="Translation proteins"/>
    <property type="match status" value="1"/>
</dbReference>
<dbReference type="PROSITE" id="PS51722">
    <property type="entry name" value="G_TR_2"/>
    <property type="match status" value="1"/>
</dbReference>
<organism>
    <name type="scientific">Archaeoglobus fulgidus (strain ATCC 49558 / DSM 4304 / JCM 9628 / NBRC 100126 / VC-16)</name>
    <dbReference type="NCBI Taxonomy" id="224325"/>
    <lineage>
        <taxon>Archaea</taxon>
        <taxon>Methanobacteriati</taxon>
        <taxon>Methanobacteriota</taxon>
        <taxon>Archaeoglobi</taxon>
        <taxon>Archaeoglobales</taxon>
        <taxon>Archaeoglobaceae</taxon>
        <taxon>Archaeoglobus</taxon>
    </lineage>
</organism>
<keyword id="KW-0342">GTP-binding</keyword>
<keyword id="KW-0378">Hydrolase</keyword>
<keyword id="KW-0396">Initiation factor</keyword>
<keyword id="KW-0460">Magnesium</keyword>
<keyword id="KW-0479">Metal-binding</keyword>
<keyword id="KW-0547">Nucleotide-binding</keyword>
<keyword id="KW-0648">Protein biosynthesis</keyword>
<keyword id="KW-1185">Reference proteome</keyword>
<comment type="function">
    <text evidence="1">eIF-2 functions in the early steps of protein synthesis by forming a ternary complex with GTP and initiator tRNA.</text>
</comment>
<comment type="catalytic activity">
    <reaction evidence="1">
        <text>GTP + H2O = GDP + phosphate + H(+)</text>
        <dbReference type="Rhea" id="RHEA:19669"/>
        <dbReference type="ChEBI" id="CHEBI:15377"/>
        <dbReference type="ChEBI" id="CHEBI:15378"/>
        <dbReference type="ChEBI" id="CHEBI:37565"/>
        <dbReference type="ChEBI" id="CHEBI:43474"/>
        <dbReference type="ChEBI" id="CHEBI:58189"/>
        <dbReference type="EC" id="3.6.5.3"/>
    </reaction>
</comment>
<comment type="cofactor">
    <cofactor evidence="1">
        <name>Mg(2+)</name>
        <dbReference type="ChEBI" id="CHEBI:18420"/>
    </cofactor>
</comment>
<comment type="subunit">
    <text evidence="1">Heterotrimer composed of an alpha, a beta and a gamma chain.</text>
</comment>
<comment type="similarity">
    <text evidence="1 2">Belongs to the TRAFAC class translation factor GTPase superfamily. Classic translation factor GTPase family. EIF2G subfamily.</text>
</comment>
<sequence length="424" mass="46271">MRRNPSTFKYIPLRIDFMSEVPLPEVNIGLVGHVDHGKTTLVAALSGVWTDRHSEELKRGISIKLGYADATFRKCPECEPPEAYTVEEICPIHGVETEILRTVSFVDSPGHEMLMATMLSGAAIMDGAVLVIAANEKCPRPQTKEHLMALQIIGIDKIVIAQNKIDIVSRERVLENYQEIKEFVKGTVAENAPIIPISAQQKVNMDALIEAIEETIPTPERDLDSPPLMHVARSFDVNKPGTPPEKLLGGVLGGSLSRGRIRVGDEIEIRPGVKDERGNWNPLFTEVQSIVASGRFVDEATPGGLVGIATKLDPTLTKSDALVGNVVGHPGNLPDVLTSFTMEVNLLERVVGLDEEMEVEKIKMNEPLMLAVGTAITLGVVTSARDDIVEVKLRRPVCADKGSRVAISRRVGSRWRLIGAGIIR</sequence>
<evidence type="ECO:0000255" key="1">
    <source>
        <dbReference type="HAMAP-Rule" id="MF_00119"/>
    </source>
</evidence>
<evidence type="ECO:0000305" key="2"/>
<feature type="chain" id="PRO_0000137450" description="Translation initiation factor 2 subunit gamma">
    <location>
        <begin position="1"/>
        <end position="424"/>
    </location>
</feature>
<feature type="domain" description="tr-type G" evidence="1">
    <location>
        <begin position="23"/>
        <end position="220"/>
    </location>
</feature>
<feature type="region of interest" description="G1" evidence="1">
    <location>
        <begin position="32"/>
        <end position="39"/>
    </location>
</feature>
<feature type="region of interest" description="G2" evidence="1">
    <location>
        <begin position="60"/>
        <end position="64"/>
    </location>
</feature>
<feature type="region of interest" description="G3" evidence="1">
    <location>
        <begin position="107"/>
        <end position="110"/>
    </location>
</feature>
<feature type="region of interest" description="G4" evidence="1">
    <location>
        <begin position="163"/>
        <end position="166"/>
    </location>
</feature>
<feature type="region of interest" description="G5" evidence="1">
    <location>
        <begin position="198"/>
        <end position="200"/>
    </location>
</feature>
<feature type="binding site" evidence="1">
    <location>
        <begin position="35"/>
        <end position="40"/>
    </location>
    <ligand>
        <name>GTP</name>
        <dbReference type="ChEBI" id="CHEBI:37565"/>
    </ligand>
</feature>
<feature type="binding site" evidence="1">
    <location>
        <position position="35"/>
    </location>
    <ligand>
        <name>Mg(2+)</name>
        <dbReference type="ChEBI" id="CHEBI:18420"/>
        <label>2</label>
    </ligand>
</feature>
<feature type="binding site" evidence="1">
    <location>
        <position position="39"/>
    </location>
    <ligand>
        <name>Mg(2+)</name>
        <dbReference type="ChEBI" id="CHEBI:18420"/>
        <label>1</label>
    </ligand>
</feature>
<feature type="binding site" evidence="1">
    <location>
        <position position="60"/>
    </location>
    <ligand>
        <name>Mg(2+)</name>
        <dbReference type="ChEBI" id="CHEBI:18420"/>
        <label>2</label>
    </ligand>
</feature>
<feature type="binding site" evidence="1">
    <location>
        <position position="62"/>
    </location>
    <ligand>
        <name>Mg(2+)</name>
        <dbReference type="ChEBI" id="CHEBI:18420"/>
        <label>1</label>
    </ligand>
</feature>
<feature type="binding site" evidence="1">
    <location>
        <begin position="163"/>
        <end position="166"/>
    </location>
    <ligand>
        <name>GTP</name>
        <dbReference type="ChEBI" id="CHEBI:37565"/>
    </ligand>
</feature>
<feature type="binding site" evidence="1">
    <location>
        <begin position="198"/>
        <end position="200"/>
    </location>
    <ligand>
        <name>GTP</name>
        <dbReference type="ChEBI" id="CHEBI:37565"/>
    </ligand>
</feature>